<dbReference type="EMBL" id="Z47081">
    <property type="protein sequence ID" value="CAA87390.1"/>
    <property type="molecule type" value="Genomic_DNA"/>
</dbReference>
<dbReference type="EMBL" id="AACD01000051">
    <property type="protein sequence ID" value="EAA63426.1"/>
    <property type="molecule type" value="Genomic_DNA"/>
</dbReference>
<dbReference type="EMBL" id="BN001306">
    <property type="protein sequence ID" value="CBF83867.1"/>
    <property type="molecule type" value="Genomic_DNA"/>
</dbReference>
<dbReference type="PIR" id="S54308">
    <property type="entry name" value="S54308"/>
</dbReference>
<dbReference type="RefSeq" id="XP_660459.1">
    <property type="nucleotide sequence ID" value="XM_655367.1"/>
</dbReference>
<dbReference type="ELM" id="Q00202"/>
<dbReference type="STRING" id="227321.Q00202"/>
<dbReference type="KEGG" id="ani:ANIA_02855"/>
<dbReference type="eggNOG" id="KOG1721">
    <property type="taxonomic scope" value="Eukaryota"/>
</dbReference>
<dbReference type="HOGENOM" id="CLU_012842_1_0_1"/>
<dbReference type="InParanoid" id="Q00202"/>
<dbReference type="OrthoDB" id="6155966at2759"/>
<dbReference type="PHI-base" id="PHI:398"/>
<dbReference type="Proteomes" id="UP000000560">
    <property type="component" value="Chromosome VI"/>
</dbReference>
<dbReference type="GO" id="GO:0005737">
    <property type="term" value="C:cytoplasm"/>
    <property type="evidence" value="ECO:0007669"/>
    <property type="project" value="UniProtKB-SubCell"/>
</dbReference>
<dbReference type="GO" id="GO:0005634">
    <property type="term" value="C:nucleus"/>
    <property type="evidence" value="ECO:0000318"/>
    <property type="project" value="GO_Central"/>
</dbReference>
<dbReference type="GO" id="GO:0003677">
    <property type="term" value="F:DNA binding"/>
    <property type="evidence" value="ECO:0007669"/>
    <property type="project" value="UniProtKB-KW"/>
</dbReference>
<dbReference type="GO" id="GO:0008270">
    <property type="term" value="F:zinc ion binding"/>
    <property type="evidence" value="ECO:0007669"/>
    <property type="project" value="UniProtKB-KW"/>
</dbReference>
<dbReference type="GO" id="GO:0045944">
    <property type="term" value="P:positive regulation of transcription by RNA polymerase II"/>
    <property type="evidence" value="ECO:0000318"/>
    <property type="project" value="GO_Central"/>
</dbReference>
<dbReference type="FunFam" id="3.30.160.60:FF:000993">
    <property type="entry name" value="pH-response transcription factor pacC/RIM101"/>
    <property type="match status" value="1"/>
</dbReference>
<dbReference type="FunFam" id="3.30.160.60:FF:001369">
    <property type="entry name" value="pH-response transcription factor pacC/RIM101"/>
    <property type="match status" value="1"/>
</dbReference>
<dbReference type="Gene3D" id="3.30.160.60">
    <property type="entry name" value="Classic Zinc Finger"/>
    <property type="match status" value="2"/>
</dbReference>
<dbReference type="InterPro" id="IPR050806">
    <property type="entry name" value="pacC/RIM101"/>
</dbReference>
<dbReference type="InterPro" id="IPR036236">
    <property type="entry name" value="Znf_C2H2_sf"/>
</dbReference>
<dbReference type="InterPro" id="IPR013087">
    <property type="entry name" value="Znf_C2H2_type"/>
</dbReference>
<dbReference type="PANTHER" id="PTHR47257">
    <property type="entry name" value="PH-RESPONSE TRANSCRIPTION FACTOR PACC/RIM101"/>
    <property type="match status" value="1"/>
</dbReference>
<dbReference type="PANTHER" id="PTHR47257:SF1">
    <property type="entry name" value="PH-RESPONSE TRANSCRIPTION FACTOR PACC_RIM101"/>
    <property type="match status" value="1"/>
</dbReference>
<dbReference type="SMART" id="SM00355">
    <property type="entry name" value="ZnF_C2H2"/>
    <property type="match status" value="3"/>
</dbReference>
<dbReference type="SUPFAM" id="SSF57667">
    <property type="entry name" value="beta-beta-alpha zinc fingers"/>
    <property type="match status" value="2"/>
</dbReference>
<dbReference type="PROSITE" id="PS00028">
    <property type="entry name" value="ZINC_FINGER_C2H2_1"/>
    <property type="match status" value="2"/>
</dbReference>
<dbReference type="PROSITE" id="PS50157">
    <property type="entry name" value="ZINC_FINGER_C2H2_2"/>
    <property type="match status" value="2"/>
</dbReference>
<organism>
    <name type="scientific">Emericella nidulans (strain FGSC A4 / ATCC 38163 / CBS 112.46 / NRRL 194 / M139)</name>
    <name type="common">Aspergillus nidulans</name>
    <dbReference type="NCBI Taxonomy" id="227321"/>
    <lineage>
        <taxon>Eukaryota</taxon>
        <taxon>Fungi</taxon>
        <taxon>Dikarya</taxon>
        <taxon>Ascomycota</taxon>
        <taxon>Pezizomycotina</taxon>
        <taxon>Eurotiomycetes</taxon>
        <taxon>Eurotiomycetidae</taxon>
        <taxon>Eurotiales</taxon>
        <taxon>Aspergillaceae</taxon>
        <taxon>Aspergillus</taxon>
        <taxon>Aspergillus subgen. Nidulantes</taxon>
    </lineage>
</organism>
<accession>Q00202</accession>
<accession>C8VJC9</accession>
<accession>Q5B9C5</accession>
<sequence length="678" mass="72939">MLGAMAEEAVAPVAVPTTQEQPTSQPAAAQVTTVTSPSVTATAAAATAAVASPQANGNAASPVAPASSTSRPAEELTCMWQGCSEKLPTPESLYEHVCERHVGRKSTNNLNLTCQWGSCRTTTVKRDHITSHIRVHVPLKPHKCDFCGKAFKRPQDLKKHVKTHADDSVLVRSPEPGSRNPDMMFGGNGKGYAAAHYFEPALNPVPSQGYAHGPPQYYQAHHAPQPSNPSYGNVYYALNTGPEPHQASYESKKRGYDALNEFFGDLKRRQFDPNSYAAVGQRLLSLQNLSLPVLTAAPLPEYQAMPAPVAVASGPYGGGPHPAPAYHLPPMSNVRTKNDLINIDQFLQQMQDTIYENDDNVAAAGVAQPGAHYIHNGISYRTTHSPPTQLPSAHATTQTTAGPIISNTSAHSPSSSTPALTPPSSAQSYTSGRSPISLPSAHRVSPPHESGSSMYPRLPSATDGMTSGYTAASSAAPPSTLGGIFDNDERRRYTGGTLQRARPASRAASESMDLSSDDKESGERTPKQISASLIDPALHSGSPGEDDVTRTAKAATEVAERSDVQSEWVEKVRLIEYLRNYIANRLERGEFSDDSEQEQDQEQEQDQEQEQDQEQGQDRVSRSPVSKADVDMEGVERDSLPRSPRTVPIKTDGESAEDSVMYPTLRGLDEDGDSKMPS</sequence>
<gene>
    <name type="primary">pacC</name>
    <name type="ORF">AN2855</name>
</gene>
<proteinExistence type="evidence at protein level"/>
<feature type="chain" id="PRO_0000046832" description="pH-response transcription factor pacC/RIM101 closed form">
    <location>
        <begin position="1"/>
        <end position="678"/>
    </location>
</feature>
<feature type="chain" id="PRO_0000312590" description="pH-response transcription factor pacC/RIM101 open form 2">
    <location>
        <begin position="1"/>
        <end position="493" status="uncertain"/>
    </location>
</feature>
<feature type="chain" id="PRO_0000312589" description="pH-response transcription factor pacC/RIM101 open form 1">
    <location>
        <begin position="1"/>
        <end position="252" status="uncertain"/>
    </location>
</feature>
<feature type="propeptide" id="PRO_0000312591" description="Removed in open form 1; by processing protease">
    <location>
        <begin position="253" status="uncertain"/>
        <end position="493" status="uncertain"/>
    </location>
</feature>
<feature type="propeptide" id="PRO_0000312592" description="Removed in open form 2; by signaling protease">
    <location>
        <begin position="494" status="uncertain"/>
        <end position="678"/>
    </location>
</feature>
<feature type="zinc finger region" description="C2H2-type 1" evidence="1">
    <location>
        <begin position="76"/>
        <end position="101"/>
    </location>
</feature>
<feature type="zinc finger region" description="C2H2-type 2" evidence="1">
    <location>
        <begin position="112"/>
        <end position="136"/>
    </location>
</feature>
<feature type="zinc finger region" description="C2H2-type 3" evidence="1">
    <location>
        <begin position="142"/>
        <end position="164"/>
    </location>
</feature>
<feature type="region of interest" description="Disordered" evidence="2">
    <location>
        <begin position="1"/>
        <end position="31"/>
    </location>
</feature>
<feature type="region of interest" description="Disordered" evidence="2">
    <location>
        <begin position="51"/>
        <end position="70"/>
    </location>
</feature>
<feature type="region of interest" description="Interacting region A">
    <location>
        <begin position="169"/>
        <end position="301"/>
    </location>
</feature>
<feature type="region of interest" description="Processing protease cleavage">
    <location>
        <begin position="252"/>
        <end position="254"/>
    </location>
</feature>
<feature type="region of interest" description="Interacting region B">
    <location>
        <begin position="334"/>
        <end position="410"/>
    </location>
</feature>
<feature type="region of interest" description="Disordered" evidence="2">
    <location>
        <begin position="377"/>
        <end position="565"/>
    </location>
</feature>
<feature type="region of interest" description="Signaling protease box">
    <location>
        <begin position="479"/>
        <end position="502"/>
    </location>
</feature>
<feature type="region of interest" description="Signaling protease cleavage">
    <location>
        <begin position="493"/>
        <end position="500"/>
    </location>
</feature>
<feature type="region of interest" description="Interacting region C">
    <location>
        <begin position="529"/>
        <end position="592"/>
    </location>
</feature>
<feature type="region of interest" description="Disordered" evidence="2">
    <location>
        <begin position="590"/>
        <end position="678"/>
    </location>
</feature>
<feature type="short sequence motif" description="Nuclear localization signal">
    <location>
        <begin position="158"/>
        <end position="164"/>
    </location>
</feature>
<feature type="short sequence motif" description="YPX[LI] motif 1">
    <location>
        <begin position="455"/>
        <end position="458"/>
    </location>
</feature>
<feature type="short sequence motif" description="YPX[LI] motif 2">
    <location>
        <begin position="662"/>
        <end position="665"/>
    </location>
</feature>
<feature type="compositionally biased region" description="Polar residues" evidence="2">
    <location>
        <begin position="379"/>
        <end position="401"/>
    </location>
</feature>
<feature type="compositionally biased region" description="Low complexity" evidence="2">
    <location>
        <begin position="406"/>
        <end position="428"/>
    </location>
</feature>
<feature type="compositionally biased region" description="Low complexity" evidence="2">
    <location>
        <begin position="500"/>
        <end position="511"/>
    </location>
</feature>
<feature type="compositionally biased region" description="Basic and acidic residues" evidence="2">
    <location>
        <begin position="516"/>
        <end position="526"/>
    </location>
</feature>
<feature type="compositionally biased region" description="Acidic residues" evidence="2">
    <location>
        <begin position="592"/>
        <end position="615"/>
    </location>
</feature>
<feature type="compositionally biased region" description="Basic and acidic residues" evidence="2">
    <location>
        <begin position="628"/>
        <end position="640"/>
    </location>
</feature>
<feature type="mutagenesis site" description="Prevents intramolecular interactions, resulting in the 'open' conformation protein committed to processing independent on ambient pH." evidence="11">
    <original>L</original>
    <variation>R</variation>
    <location>
        <position position="259"/>
    </location>
</feature>
<feature type="mutagenesis site" description="Prevents intramolecular interactions, resulting in the 'open' conformation protein committed to processing independent on ambient pH." evidence="11">
    <original>L</original>
    <variation>F</variation>
    <location>
        <position position="266"/>
    </location>
</feature>
<feature type="mutagenesis site" description="Prevents intramolecular interactions, resulting in the 'open' conformation protein committed to processing independent on ambient pH." evidence="3 11">
    <original>L</original>
    <variation>S</variation>
    <location>
        <position position="340"/>
    </location>
</feature>
<feature type="mutagenesis site" description="Abolishes interaction with palA. Severely reduces proteolytic processing of the full-length translation product by signaling protease, causing a stringent loss-of-function, acidity-mimicking phenotype." evidence="6">
    <original>Y</original>
    <variation>D</variation>
    <location>
        <position position="455"/>
    </location>
</feature>
<feature type="mutagenesis site" description="Partially reduces proteolytic cleavage of the full-length translation product by signaling protease." evidence="5">
    <original>L</original>
    <variation>F</variation>
    <location>
        <position position="498"/>
    </location>
</feature>
<feature type="mutagenesis site" description="Completely prevents proteolytic cleavage of the full-length translation product by signaling protease." evidence="5">
    <original>L</original>
    <variation>S</variation>
    <location>
        <position position="498"/>
    </location>
</feature>
<feature type="mutagenesis site" description="Prevents intramolecular interactions, resulting in the 'open' conformation protein committed to processing independent on ambient pH." evidence="3">
    <original>R</original>
    <variation>W</variation>
    <location>
        <position position="573"/>
    </location>
</feature>
<feature type="mutagenesis site" description="Prevents intramolecular interactions, resulting in the 'open' conformation protein committed to processing independent on ambient pH." evidence="3">
    <original>R</original>
    <variation>G</variation>
    <variation>T</variation>
    <location>
        <position position="579"/>
    </location>
</feature>
<feature type="mutagenesis site" description="Abolishes interaction with palA. Partially reduces proteolytic processing of the full-length translation product by signaling protease, causing a weak loss-of-function phenotype." evidence="6">
    <original>Y</original>
    <variation>N</variation>
    <location>
        <position position="662"/>
    </location>
</feature>
<feature type="sequence conflict" description="In Ref. 2; EAA63426/CBF83867." evidence="12" ref="2">
    <original>G</original>
    <variation>F</variation>
    <location>
        <position position="189"/>
    </location>
</feature>
<protein>
    <recommendedName>
        <fullName>pH-response transcription factor pacC/RIM101</fullName>
    </recommendedName>
    <component>
        <recommendedName>
            <fullName>pH-response transcription factor pacC/RIM101 closed form</fullName>
        </recommendedName>
    </component>
    <component>
        <recommendedName>
            <fullName>pH-response transcription factor pacC/RIM101 open form 1</fullName>
        </recommendedName>
    </component>
    <component>
        <recommendedName>
            <fullName>pH-response transcription factor pacC/RIM101 open form 2</fullName>
        </recommendedName>
    </component>
</protein>
<reference key="1">
    <citation type="journal article" date="1995" name="EMBO J.">
        <title>The Aspergillus PacC zinc finger transcription factor mediates regulation of both acid- and alkaline-expressed genes by ambient pH.</title>
        <authorList>
            <person name="Tilburn J."/>
            <person name="Sarkar S."/>
            <person name="Widdick D.A."/>
            <person name="Espeso E.A."/>
            <person name="Orejas M."/>
            <person name="Mungroo J."/>
            <person name="Penalva M.A."/>
            <person name="Arst H.N. Jr."/>
        </authorList>
    </citation>
    <scope>NUCLEOTIDE SEQUENCE [GENOMIC DNA]</scope>
    <scope>FUNCTION</scope>
    <scope>INDUCTION</scope>
    <scope>DNA-BINDING</scope>
    <scope>MUTAGENESIS</scope>
    <source>
        <strain>FGSC A4 / ATCC 38163 / CBS 112.46 / NRRL 194 / M139</strain>
    </source>
</reference>
<reference key="2">
    <citation type="journal article" date="2005" name="Nature">
        <title>Sequencing of Aspergillus nidulans and comparative analysis with A. fumigatus and A. oryzae.</title>
        <authorList>
            <person name="Galagan J.E."/>
            <person name="Calvo S.E."/>
            <person name="Cuomo C."/>
            <person name="Ma L.-J."/>
            <person name="Wortman J.R."/>
            <person name="Batzoglou S."/>
            <person name="Lee S.-I."/>
            <person name="Bastuerkmen M."/>
            <person name="Spevak C.C."/>
            <person name="Clutterbuck J."/>
            <person name="Kapitonov V."/>
            <person name="Jurka J."/>
            <person name="Scazzocchio C."/>
            <person name="Farman M.L."/>
            <person name="Butler J."/>
            <person name="Purcell S."/>
            <person name="Harris S."/>
            <person name="Braus G.H."/>
            <person name="Draht O."/>
            <person name="Busch S."/>
            <person name="D'Enfert C."/>
            <person name="Bouchier C."/>
            <person name="Goldman G.H."/>
            <person name="Bell-Pedersen D."/>
            <person name="Griffiths-Jones S."/>
            <person name="Doonan J.H."/>
            <person name="Yu J."/>
            <person name="Vienken K."/>
            <person name="Pain A."/>
            <person name="Freitag M."/>
            <person name="Selker E.U."/>
            <person name="Archer D.B."/>
            <person name="Penalva M.A."/>
            <person name="Oakley B.R."/>
            <person name="Momany M."/>
            <person name="Tanaka T."/>
            <person name="Kumagai T."/>
            <person name="Asai K."/>
            <person name="Machida M."/>
            <person name="Nierman W.C."/>
            <person name="Denning D.W."/>
            <person name="Caddick M.X."/>
            <person name="Hynes M."/>
            <person name="Paoletti M."/>
            <person name="Fischer R."/>
            <person name="Miller B.L."/>
            <person name="Dyer P.S."/>
            <person name="Sachs M.S."/>
            <person name="Osmani S.A."/>
            <person name="Birren B.W."/>
        </authorList>
    </citation>
    <scope>NUCLEOTIDE SEQUENCE [LARGE SCALE GENOMIC DNA]</scope>
    <source>
        <strain>FGSC A4 / ATCC 38163 / CBS 112.46 / NRRL 194 / M139</strain>
    </source>
</reference>
<reference key="3">
    <citation type="journal article" date="2009" name="Fungal Genet. Biol.">
        <title>The 2008 update of the Aspergillus nidulans genome annotation: a community effort.</title>
        <authorList>
            <person name="Wortman J.R."/>
            <person name="Gilsenan J.M."/>
            <person name="Joardar V."/>
            <person name="Deegan J."/>
            <person name="Clutterbuck J."/>
            <person name="Andersen M.R."/>
            <person name="Archer D."/>
            <person name="Bencina M."/>
            <person name="Braus G."/>
            <person name="Coutinho P."/>
            <person name="von Dohren H."/>
            <person name="Doonan J."/>
            <person name="Driessen A.J."/>
            <person name="Durek P."/>
            <person name="Espeso E."/>
            <person name="Fekete E."/>
            <person name="Flipphi M."/>
            <person name="Estrada C.G."/>
            <person name="Geysens S."/>
            <person name="Goldman G."/>
            <person name="de Groot P.W."/>
            <person name="Hansen K."/>
            <person name="Harris S.D."/>
            <person name="Heinekamp T."/>
            <person name="Helmstaedt K."/>
            <person name="Henrissat B."/>
            <person name="Hofmann G."/>
            <person name="Homan T."/>
            <person name="Horio T."/>
            <person name="Horiuchi H."/>
            <person name="James S."/>
            <person name="Jones M."/>
            <person name="Karaffa L."/>
            <person name="Karanyi Z."/>
            <person name="Kato M."/>
            <person name="Keller N."/>
            <person name="Kelly D.E."/>
            <person name="Kiel J.A."/>
            <person name="Kim J.M."/>
            <person name="van der Klei I.J."/>
            <person name="Klis F.M."/>
            <person name="Kovalchuk A."/>
            <person name="Krasevec N."/>
            <person name="Kubicek C.P."/>
            <person name="Liu B."/>
            <person name="Maccabe A."/>
            <person name="Meyer V."/>
            <person name="Mirabito P."/>
            <person name="Miskei M."/>
            <person name="Mos M."/>
            <person name="Mullins J."/>
            <person name="Nelson D.R."/>
            <person name="Nielsen J."/>
            <person name="Oakley B.R."/>
            <person name="Osmani S.A."/>
            <person name="Pakula T."/>
            <person name="Paszewski A."/>
            <person name="Paulsen I."/>
            <person name="Pilsyk S."/>
            <person name="Pocsi I."/>
            <person name="Punt P.J."/>
            <person name="Ram A.F."/>
            <person name="Ren Q."/>
            <person name="Robellet X."/>
            <person name="Robson G."/>
            <person name="Seiboth B."/>
            <person name="van Solingen P."/>
            <person name="Specht T."/>
            <person name="Sun J."/>
            <person name="Taheri-Talesh N."/>
            <person name="Takeshita N."/>
            <person name="Ussery D."/>
            <person name="vanKuyk P.A."/>
            <person name="Visser H."/>
            <person name="van de Vondervoort P.J."/>
            <person name="de Vries R.P."/>
            <person name="Walton J."/>
            <person name="Xiang X."/>
            <person name="Xiong Y."/>
            <person name="Zeng A.P."/>
            <person name="Brandt B.W."/>
            <person name="Cornell M.J."/>
            <person name="van den Hondel C.A."/>
            <person name="Visser J."/>
            <person name="Oliver S.G."/>
            <person name="Turner G."/>
        </authorList>
    </citation>
    <scope>GENOME REANNOTATION</scope>
    <source>
        <strain>FGSC A4 / ATCC 38163 / CBS 112.46 / NRRL 194 / M139</strain>
    </source>
</reference>
<reference key="4">
    <citation type="journal article" date="1995" name="Genes Dev.">
        <title>Activation of the Aspergillus PacC transcription factor in response to alkaline ambient pH requires proteolysis of the carboxy-terminal moiety.</title>
        <authorList>
            <person name="Orejas M."/>
            <person name="Espeso E.A."/>
            <person name="Tilburn J."/>
            <person name="Sarkar S."/>
            <person name="Arst H.N. Jr."/>
            <person name="Penalva M.A."/>
        </authorList>
    </citation>
    <scope>FUNCTION</scope>
    <scope>PROTEOLYTIC PROCESSING</scope>
</reference>
<reference key="5">
    <citation type="journal article" date="1997" name="J. Mol. Biol.">
        <title>Specific DNA recognition by the Aspergillus nidulans three zinc finger transcription factor PacC.</title>
        <authorList>
            <person name="Espeso E.A."/>
            <person name="Tilburn J."/>
            <person name="Sanchez-Pulido L."/>
            <person name="Brown C.V."/>
            <person name="Valencia A."/>
            <person name="Arst H.N. Jr."/>
            <person name="Penalva M.A."/>
        </authorList>
    </citation>
    <scope>DNA-BINDING</scope>
</reference>
<reference key="6">
    <citation type="journal article" date="1999" name="Mol. Cell. Biol.">
        <title>Specificity determinants of proteolytic processing of Aspergillus PacC transcription factor are remote from the processing site, and processing occurs in yeast if pH signalling is bypassed.</title>
        <authorList>
            <person name="Mingot J.-M."/>
            <person name="Tilburn J."/>
            <person name="Diez E."/>
            <person name="Bignell E."/>
            <person name="Orejas M."/>
            <person name="Widdick D.A."/>
            <person name="Sarkar S."/>
            <person name="Brown C.V."/>
            <person name="Caddick M.X."/>
            <person name="Espeso E.A."/>
            <person name="Arst H.N. Jr."/>
            <person name="Penalva M.A."/>
        </authorList>
    </citation>
    <scope>IDENTIFICATION OF PROBABLE INITIATION SITE</scope>
    <scope>MUTAGENESIS OF LEU-259; LEU-266 AND LEU-340</scope>
</reference>
<reference key="7">
    <citation type="journal article" date="2000" name="EMBO J.">
        <title>On how a transcription factor can avoid its proteolytic activation in the absence of signal transduction.</title>
        <authorList>
            <person name="Espeso E.A."/>
            <person name="Roncal T."/>
            <person name="Diez E."/>
            <person name="Rainbow L."/>
            <person name="Bignell E."/>
            <person name="Alvaro J."/>
            <person name="Suarez T."/>
            <person name="Denison S.H."/>
            <person name="Tilburn J."/>
            <person name="Arst H.N. Jr."/>
            <person name="Penalva M.A."/>
        </authorList>
    </citation>
    <scope>INTRAMOLECULAR INTERACTION</scope>
    <scope>MUTAGENESIS OF LEU-340; ARG-573 AND ARG-579</scope>
</reference>
<reference key="8">
    <citation type="journal article" date="2001" name="Mol. Cell. Biol.">
        <title>Ambient pH signaling regulates nuclear localization of the Aspergillus nidulans PacC transcription factor.</title>
        <authorList>
            <person name="Mingot J.-M."/>
            <person name="Espeso E.A."/>
            <person name="Diez E."/>
            <person name="Penalva M.A."/>
        </authorList>
    </citation>
    <scope>SUBCELLULAR LOCATION</scope>
</reference>
<reference key="9">
    <citation type="journal article" date="2002" name="EMBO J.">
        <title>Activation of the Aspergillus PacC zinc finger transcription factor requires two proteolytic steps.</title>
        <authorList>
            <person name="Diez E."/>
            <person name="Alvaro J."/>
            <person name="Espeso E.A."/>
            <person name="Rainbow L."/>
            <person name="Suarez T."/>
            <person name="Tilburn J."/>
            <person name="Arst H.N. Jr."/>
            <person name="Penalva M.A."/>
        </authorList>
    </citation>
    <scope>PROTEOLYTIC PROCESSING</scope>
    <scope>MUTAGENESIS OF LEU-498</scope>
</reference>
<reference key="10">
    <citation type="journal article" date="2003" name="J. Mol. Biol.">
        <title>Overlap of nuclear localisation signal and specific DNA-binding residues within the zinc finger domain of PacC.</title>
        <authorList>
            <person name="Fernandez-Martinez J."/>
            <person name="Brown C.V."/>
            <person name="Diez E."/>
            <person name="Tilburn J."/>
            <person name="Arst H.N. Jr."/>
            <person name="Penalva M.A."/>
            <person name="Espeso E.A."/>
        </authorList>
    </citation>
    <scope>DNA-BINDING</scope>
    <scope>DOMAINS</scope>
</reference>
<reference key="11">
    <citation type="journal article" date="2003" name="Mol. Cell. Biol.">
        <title>YPXL/I is a protein interaction motif recognized by Aspergillus PalA and its human homologue, AIP1/Alix.</title>
        <authorList>
            <person name="Vincent O."/>
            <person name="Rainbow L."/>
            <person name="Tilburn J."/>
            <person name="Arst H.N. Jr."/>
            <person name="Penalva M.A."/>
        </authorList>
    </citation>
    <scope>INTERACTION WITH PALA</scope>
    <scope>MUTAGENESIS OF TYR-455 AND TYR-662</scope>
</reference>
<reference key="12">
    <citation type="journal article" date="2005" name="Mol. Microbiol.">
        <title>The Aspergillus pH-responsive transcription factor PacC regulates virulence.</title>
        <authorList>
            <person name="Bignell E."/>
            <person name="Negrete-Urtasun S."/>
            <person name="Calcagno A.M."/>
            <person name="Haynes K."/>
            <person name="Arst H.N. Jr."/>
            <person name="Rogers T."/>
        </authorList>
    </citation>
    <scope>FUNCTION IN VIRULENCE</scope>
</reference>
<comment type="function">
    <text evidence="8 9 10">Transcription factor that mediates regulation of both acid- and alkaline-expressed genes in response to ambient pH. At alkaline ambient pH, activates transcription of alkaline-expressed genes (including pacC itself) and represses transcription of acid-expressed genes. Specifically recognizes and binds the consensus sequence 5'-GCCARG-3'. Required for virulence in invasive pulmonary aspergillosis (IPA).</text>
</comment>
<comment type="subunit">
    <text evidence="6">Binds to DNA. Interacts with palA, which binds to the two YPX[LI] motifs and is required for proteolytic processing.</text>
</comment>
<comment type="subcellular location">
    <subcellularLocation>
        <location evidence="4">Cytoplasm</location>
    </subcellularLocation>
    <subcellularLocation>
        <location evidence="4">Nucleus</location>
    </subcellularLocation>
    <text>Cytoplasmic at acidic ambient pH, and nuclear in its processed form at alkaline ambient pH.</text>
</comment>
<comment type="induction">
    <text evidence="10">By alkaline conditions.</text>
</comment>
<comment type="domain">
    <text evidence="7">Only zinc fingers 2 and 3 contact DNA. Zinc finger 1 interacts with zinc finger 2.</text>
</comment>
<comment type="domain">
    <text evidence="7">Interacting regions A, B and C form intramolecular interactions in the full-length translation product at acidic ambient pH, keeping the protein in a 'closed' conformation preventing proteolytic cleavage by the processing protease.</text>
</comment>
<comment type="PTM">
    <text evidence="5 9">Activated by C-terminal proteolytic cleavage. At neutral to alkaline ambient pH, the signaling protease (probably palB) cleaves pacC within the conserved 24-residue signaling protease box, removing the C-terminal interacting region C and producing a 53 kDa 'open' conformation intermediate protein, which is committed to further processing. In an ambient pH-independent reaction, the processing protease (probably the proteasome) removes additional C-terminal residues to yield the 27 kDa functional form.</text>
</comment>
<comment type="similarity">
    <text evidence="12">Belongs to the pacC/RIM101 family.</text>
</comment>
<comment type="caution">
    <text evidence="12">Met-5 is the major initiator, but Met-1 may also be used.</text>
</comment>
<evidence type="ECO:0000255" key="1">
    <source>
        <dbReference type="PROSITE-ProRule" id="PRU00042"/>
    </source>
</evidence>
<evidence type="ECO:0000256" key="2">
    <source>
        <dbReference type="SAM" id="MobiDB-lite"/>
    </source>
</evidence>
<evidence type="ECO:0000269" key="3">
    <source>
    </source>
</evidence>
<evidence type="ECO:0000269" key="4">
    <source>
    </source>
</evidence>
<evidence type="ECO:0000269" key="5">
    <source>
    </source>
</evidence>
<evidence type="ECO:0000269" key="6">
    <source>
    </source>
</evidence>
<evidence type="ECO:0000269" key="7">
    <source>
    </source>
</evidence>
<evidence type="ECO:0000269" key="8">
    <source>
    </source>
</evidence>
<evidence type="ECO:0000269" key="9">
    <source>
    </source>
</evidence>
<evidence type="ECO:0000269" key="10">
    <source>
    </source>
</evidence>
<evidence type="ECO:0000269" key="11">
    <source>
    </source>
</evidence>
<evidence type="ECO:0000305" key="12"/>
<keyword id="KW-0010">Activator</keyword>
<keyword id="KW-0963">Cytoplasm</keyword>
<keyword id="KW-0238">DNA-binding</keyword>
<keyword id="KW-0479">Metal-binding</keyword>
<keyword id="KW-0539">Nucleus</keyword>
<keyword id="KW-1185">Reference proteome</keyword>
<keyword id="KW-0677">Repeat</keyword>
<keyword id="KW-0678">Repressor</keyword>
<keyword id="KW-0804">Transcription</keyword>
<keyword id="KW-0805">Transcription regulation</keyword>
<keyword id="KW-0862">Zinc</keyword>
<keyword id="KW-0863">Zinc-finger</keyword>
<name>PACC_EMENI</name>